<sequence length="309" mass="34849">MTDSLIHTGPFLVAALYHFVSVPRFASLQAPLQALSEENGVKGTLLLAHEGINGTIAGPDAGIHAVLAFLRAQPEFARLEHKESRASKMPFLRMKVKLKKEIVTMGVEDIDPNKVVGTYVAPRDWNALISDPDTIVIDTRNDYETAIGTFRGALDPKTKTFREFPDWVRRNTGLHNKPKVAMYCTGGIRCEKATAFMKAEGFDEVYHLKGGILKYLEEVPQEESLWEGACFVFDERVSVEHGLKEGEHRLCHACRNPITSEEITSPLYEEGVSCSHCYHTRTEEDRLRYRQRQLQIALARKRGQRHIGS</sequence>
<name>TRHO_RHIEC</name>
<proteinExistence type="inferred from homology"/>
<gene>
    <name evidence="1" type="primary">trhO</name>
    <name type="ordered locus">RHE_CH03638</name>
</gene>
<evidence type="ECO:0000255" key="1">
    <source>
        <dbReference type="HAMAP-Rule" id="MF_00469"/>
    </source>
</evidence>
<evidence type="ECO:0000305" key="2"/>
<comment type="function">
    <text evidence="1">Catalyzes oxygen-dependent 5-hydroxyuridine (ho5U) modification at position 34 in tRNAs.</text>
</comment>
<comment type="catalytic activity">
    <reaction evidence="1">
        <text>uridine(34) in tRNA + AH2 + O2 = 5-hydroxyuridine(34) in tRNA + A + H2O</text>
        <dbReference type="Rhea" id="RHEA:64224"/>
        <dbReference type="Rhea" id="RHEA-COMP:11727"/>
        <dbReference type="Rhea" id="RHEA-COMP:13381"/>
        <dbReference type="ChEBI" id="CHEBI:13193"/>
        <dbReference type="ChEBI" id="CHEBI:15377"/>
        <dbReference type="ChEBI" id="CHEBI:15379"/>
        <dbReference type="ChEBI" id="CHEBI:17499"/>
        <dbReference type="ChEBI" id="CHEBI:65315"/>
        <dbReference type="ChEBI" id="CHEBI:136877"/>
    </reaction>
</comment>
<comment type="similarity">
    <text evidence="1">Belongs to the TrhO family.</text>
</comment>
<comment type="sequence caution" evidence="2">
    <conflict type="erroneous initiation">
        <sequence resource="EMBL-CDS" id="ABC92393"/>
    </conflict>
</comment>
<accession>Q2K443</accession>
<dbReference type="EC" id="1.14.-.-" evidence="1"/>
<dbReference type="EMBL" id="CP000133">
    <property type="protein sequence ID" value="ABC92393.1"/>
    <property type="status" value="ALT_INIT"/>
    <property type="molecule type" value="Genomic_DNA"/>
</dbReference>
<dbReference type="RefSeq" id="WP_020922304.1">
    <property type="nucleotide sequence ID" value="NC_007761.1"/>
</dbReference>
<dbReference type="SMR" id="Q2K443"/>
<dbReference type="KEGG" id="ret:RHE_CH03638"/>
<dbReference type="eggNOG" id="COG1054">
    <property type="taxonomic scope" value="Bacteria"/>
</dbReference>
<dbReference type="HOGENOM" id="CLU_038878_0_0_5"/>
<dbReference type="OrthoDB" id="9778326at2"/>
<dbReference type="Proteomes" id="UP000001936">
    <property type="component" value="Chromosome"/>
</dbReference>
<dbReference type="GO" id="GO:0016705">
    <property type="term" value="F:oxidoreductase activity, acting on paired donors, with incorporation or reduction of molecular oxygen"/>
    <property type="evidence" value="ECO:0007669"/>
    <property type="project" value="UniProtKB-UniRule"/>
</dbReference>
<dbReference type="GO" id="GO:0006400">
    <property type="term" value="P:tRNA modification"/>
    <property type="evidence" value="ECO:0007669"/>
    <property type="project" value="UniProtKB-UniRule"/>
</dbReference>
<dbReference type="CDD" id="cd01518">
    <property type="entry name" value="RHOD_YceA"/>
    <property type="match status" value="1"/>
</dbReference>
<dbReference type="Gene3D" id="3.30.70.100">
    <property type="match status" value="1"/>
</dbReference>
<dbReference type="Gene3D" id="3.40.250.10">
    <property type="entry name" value="Rhodanese-like domain"/>
    <property type="match status" value="1"/>
</dbReference>
<dbReference type="HAMAP" id="MF_00469">
    <property type="entry name" value="TrhO"/>
    <property type="match status" value="1"/>
</dbReference>
<dbReference type="InterPro" id="IPR001763">
    <property type="entry name" value="Rhodanese-like_dom"/>
</dbReference>
<dbReference type="InterPro" id="IPR036873">
    <property type="entry name" value="Rhodanese-like_dom_sf"/>
</dbReference>
<dbReference type="InterPro" id="IPR020936">
    <property type="entry name" value="TrhO"/>
</dbReference>
<dbReference type="InterPro" id="IPR040503">
    <property type="entry name" value="TRHO_N"/>
</dbReference>
<dbReference type="NCBIfam" id="NF001136">
    <property type="entry name" value="PRK00142.1-4"/>
    <property type="match status" value="1"/>
</dbReference>
<dbReference type="PANTHER" id="PTHR43268:SF3">
    <property type="entry name" value="RHODANESE-LIKE DOMAIN-CONTAINING PROTEIN 7-RELATED"/>
    <property type="match status" value="1"/>
</dbReference>
<dbReference type="PANTHER" id="PTHR43268">
    <property type="entry name" value="THIOSULFATE SULFURTRANSFERASE/RHODANESE-LIKE DOMAIN-CONTAINING PROTEIN 2"/>
    <property type="match status" value="1"/>
</dbReference>
<dbReference type="Pfam" id="PF00581">
    <property type="entry name" value="Rhodanese"/>
    <property type="match status" value="1"/>
</dbReference>
<dbReference type="Pfam" id="PF17773">
    <property type="entry name" value="UPF0176_N"/>
    <property type="match status" value="1"/>
</dbReference>
<dbReference type="SMART" id="SM00450">
    <property type="entry name" value="RHOD"/>
    <property type="match status" value="1"/>
</dbReference>
<dbReference type="SUPFAM" id="SSF52821">
    <property type="entry name" value="Rhodanese/Cell cycle control phosphatase"/>
    <property type="match status" value="1"/>
</dbReference>
<dbReference type="PROSITE" id="PS50206">
    <property type="entry name" value="RHODANESE_3"/>
    <property type="match status" value="1"/>
</dbReference>
<feature type="chain" id="PRO_0000242938" description="tRNA uridine(34) hydroxylase">
    <location>
        <begin position="1"/>
        <end position="309"/>
    </location>
</feature>
<feature type="domain" description="Rhodanese" evidence="1">
    <location>
        <begin position="130"/>
        <end position="224"/>
    </location>
</feature>
<feature type="active site" description="Cysteine persulfide intermediate" evidence="1">
    <location>
        <position position="184"/>
    </location>
</feature>
<protein>
    <recommendedName>
        <fullName evidence="1">tRNA uridine(34) hydroxylase</fullName>
        <ecNumber evidence="1">1.14.-.-</ecNumber>
    </recommendedName>
    <alternativeName>
        <fullName evidence="1">tRNA hydroxylation protein O</fullName>
    </alternativeName>
</protein>
<organism>
    <name type="scientific">Rhizobium etli (strain ATCC 51251 / DSM 11541 / JCM 21823 / NBRC 15573 / CFN 42)</name>
    <dbReference type="NCBI Taxonomy" id="347834"/>
    <lineage>
        <taxon>Bacteria</taxon>
        <taxon>Pseudomonadati</taxon>
        <taxon>Pseudomonadota</taxon>
        <taxon>Alphaproteobacteria</taxon>
        <taxon>Hyphomicrobiales</taxon>
        <taxon>Rhizobiaceae</taxon>
        <taxon>Rhizobium/Agrobacterium group</taxon>
        <taxon>Rhizobium</taxon>
    </lineage>
</organism>
<reference key="1">
    <citation type="journal article" date="2006" name="Proc. Natl. Acad. Sci. U.S.A.">
        <title>The partitioned Rhizobium etli genome: genetic and metabolic redundancy in seven interacting replicons.</title>
        <authorList>
            <person name="Gonzalez V."/>
            <person name="Santamaria R.I."/>
            <person name="Bustos P."/>
            <person name="Hernandez-Gonzalez I."/>
            <person name="Medrano-Soto A."/>
            <person name="Moreno-Hagelsieb G."/>
            <person name="Janga S.C."/>
            <person name="Ramirez M.A."/>
            <person name="Jimenez-Jacinto V."/>
            <person name="Collado-Vides J."/>
            <person name="Davila G."/>
        </authorList>
    </citation>
    <scope>NUCLEOTIDE SEQUENCE [LARGE SCALE GENOMIC DNA]</scope>
    <source>
        <strain>ATCC 51251 / DSM 11541 / JCM 21823 / NBRC 15573 / CFN 42</strain>
    </source>
</reference>
<keyword id="KW-0560">Oxidoreductase</keyword>
<keyword id="KW-1185">Reference proteome</keyword>
<keyword id="KW-0819">tRNA processing</keyword>